<reference key="1">
    <citation type="journal article" date="1999" name="Nature">
        <title>Sequence and analysis of chromosome 2 of the plant Arabidopsis thaliana.</title>
        <authorList>
            <person name="Lin X."/>
            <person name="Kaul S."/>
            <person name="Rounsley S.D."/>
            <person name="Shea T.P."/>
            <person name="Benito M.-I."/>
            <person name="Town C.D."/>
            <person name="Fujii C.Y."/>
            <person name="Mason T.M."/>
            <person name="Bowman C.L."/>
            <person name="Barnstead M.E."/>
            <person name="Feldblyum T.V."/>
            <person name="Buell C.R."/>
            <person name="Ketchum K.A."/>
            <person name="Lee J.J."/>
            <person name="Ronning C.M."/>
            <person name="Koo H.L."/>
            <person name="Moffat K.S."/>
            <person name="Cronin L.A."/>
            <person name="Shen M."/>
            <person name="Pai G."/>
            <person name="Van Aken S."/>
            <person name="Umayam L."/>
            <person name="Tallon L.J."/>
            <person name="Gill J.E."/>
            <person name="Adams M.D."/>
            <person name="Carrera A.J."/>
            <person name="Creasy T.H."/>
            <person name="Goodman H.M."/>
            <person name="Somerville C.R."/>
            <person name="Copenhaver G.P."/>
            <person name="Preuss D."/>
            <person name="Nierman W.C."/>
            <person name="White O."/>
            <person name="Eisen J.A."/>
            <person name="Salzberg S.L."/>
            <person name="Fraser C.M."/>
            <person name="Venter J.C."/>
        </authorList>
    </citation>
    <scope>NUCLEOTIDE SEQUENCE [LARGE SCALE GENOMIC DNA]</scope>
    <source>
        <strain>cv. Columbia</strain>
    </source>
</reference>
<reference key="2">
    <citation type="journal article" date="2017" name="Plant J.">
        <title>Araport11: a complete reannotation of the Arabidopsis thaliana reference genome.</title>
        <authorList>
            <person name="Cheng C.Y."/>
            <person name="Krishnakumar V."/>
            <person name="Chan A.P."/>
            <person name="Thibaud-Nissen F."/>
            <person name="Schobel S."/>
            <person name="Town C.D."/>
        </authorList>
    </citation>
    <scope>GENOME REANNOTATION</scope>
    <source>
        <strain>cv. Columbia</strain>
    </source>
</reference>
<reference key="3">
    <citation type="journal article" date="2000" name="Plant Mol. Biol.">
        <title>In Arabidopsis thaliana, 1% of the genome codes for a novel protein family unique to plants.</title>
        <authorList>
            <person name="Aubourg S."/>
            <person name="Boudet N."/>
            <person name="Kreis M."/>
            <person name="Lecharny A."/>
        </authorList>
    </citation>
    <scope>GENE FAMILY</scope>
</reference>
<reference key="4">
    <citation type="journal article" date="2004" name="Plant Cell">
        <title>Genome-wide analysis of Arabidopsis pentatricopeptide repeat proteins reveals their essential role in organelle biogenesis.</title>
        <authorList>
            <person name="Lurin C."/>
            <person name="Andres C."/>
            <person name="Aubourg S."/>
            <person name="Bellaoui M."/>
            <person name="Bitton F."/>
            <person name="Bruyere C."/>
            <person name="Caboche M."/>
            <person name="Debast C."/>
            <person name="Gualberto J."/>
            <person name="Hoffmann B."/>
            <person name="Lecharny A."/>
            <person name="Le Ret M."/>
            <person name="Martin-Magniette M.-L."/>
            <person name="Mireau H."/>
            <person name="Peeters N."/>
            <person name="Renou J.-P."/>
            <person name="Szurek B."/>
            <person name="Taconnat L."/>
            <person name="Small I."/>
        </authorList>
    </citation>
    <scope>GENE FAMILY</scope>
</reference>
<organism>
    <name type="scientific">Arabidopsis thaliana</name>
    <name type="common">Mouse-ear cress</name>
    <dbReference type="NCBI Taxonomy" id="3702"/>
    <lineage>
        <taxon>Eukaryota</taxon>
        <taxon>Viridiplantae</taxon>
        <taxon>Streptophyta</taxon>
        <taxon>Embryophyta</taxon>
        <taxon>Tracheophyta</taxon>
        <taxon>Spermatophyta</taxon>
        <taxon>Magnoliopsida</taxon>
        <taxon>eudicotyledons</taxon>
        <taxon>Gunneridae</taxon>
        <taxon>Pentapetalae</taxon>
        <taxon>rosids</taxon>
        <taxon>malvids</taxon>
        <taxon>Brassicales</taxon>
        <taxon>Brassicaceae</taxon>
        <taxon>Camelineae</taxon>
        <taxon>Arabidopsis</taxon>
    </lineage>
</organism>
<keyword id="KW-1185">Reference proteome</keyword>
<keyword id="KW-0677">Repeat</keyword>
<dbReference type="EMBL" id="AC007232">
    <property type="protein sequence ID" value="AAD25817.1"/>
    <property type="molecule type" value="Genomic_DNA"/>
</dbReference>
<dbReference type="EMBL" id="CP002685">
    <property type="protein sequence ID" value="AEC07259.1"/>
    <property type="molecule type" value="Genomic_DNA"/>
</dbReference>
<dbReference type="PIR" id="F84608">
    <property type="entry name" value="F84608"/>
</dbReference>
<dbReference type="RefSeq" id="NP_179798.1">
    <property type="nucleotide sequence ID" value="NM_127776.3"/>
</dbReference>
<dbReference type="SMR" id="Q9SHZ8"/>
<dbReference type="FunCoup" id="Q9SHZ8">
    <property type="interactions" value="375"/>
</dbReference>
<dbReference type="iPTMnet" id="Q9SHZ8"/>
<dbReference type="PaxDb" id="3702-AT2G22070.1"/>
<dbReference type="ProteomicsDB" id="250498"/>
<dbReference type="EnsemblPlants" id="AT2G22070.1">
    <property type="protein sequence ID" value="AT2G22070.1"/>
    <property type="gene ID" value="AT2G22070"/>
</dbReference>
<dbReference type="GeneID" id="816742"/>
<dbReference type="Gramene" id="AT2G22070.1">
    <property type="protein sequence ID" value="AT2G22070.1"/>
    <property type="gene ID" value="AT2G22070"/>
</dbReference>
<dbReference type="KEGG" id="ath:AT2G22070"/>
<dbReference type="Araport" id="AT2G22070"/>
<dbReference type="TAIR" id="AT2G22070"/>
<dbReference type="eggNOG" id="KOG4197">
    <property type="taxonomic scope" value="Eukaryota"/>
</dbReference>
<dbReference type="HOGENOM" id="CLU_002706_15_1_1"/>
<dbReference type="InParanoid" id="Q9SHZ8"/>
<dbReference type="OMA" id="AMIVGYN"/>
<dbReference type="OrthoDB" id="185373at2759"/>
<dbReference type="PhylomeDB" id="Q9SHZ8"/>
<dbReference type="PRO" id="PR:Q9SHZ8"/>
<dbReference type="Proteomes" id="UP000006548">
    <property type="component" value="Chromosome 2"/>
</dbReference>
<dbReference type="ExpressionAtlas" id="Q9SHZ8">
    <property type="expression patterns" value="baseline and differential"/>
</dbReference>
<dbReference type="GO" id="GO:0003723">
    <property type="term" value="F:RNA binding"/>
    <property type="evidence" value="ECO:0007669"/>
    <property type="project" value="InterPro"/>
</dbReference>
<dbReference type="GO" id="GO:0008270">
    <property type="term" value="F:zinc ion binding"/>
    <property type="evidence" value="ECO:0007669"/>
    <property type="project" value="InterPro"/>
</dbReference>
<dbReference type="GO" id="GO:0009451">
    <property type="term" value="P:RNA modification"/>
    <property type="evidence" value="ECO:0007669"/>
    <property type="project" value="InterPro"/>
</dbReference>
<dbReference type="FunFam" id="1.25.40.10:FF:001162">
    <property type="entry name" value="Pentatricopeptide repeat-containing protein"/>
    <property type="match status" value="1"/>
</dbReference>
<dbReference type="FunFam" id="1.25.40.10:FF:002598">
    <property type="entry name" value="Pentatricopeptide repeat-containing protein At2g22070"/>
    <property type="match status" value="1"/>
</dbReference>
<dbReference type="FunFam" id="1.25.40.10:FF:000442">
    <property type="entry name" value="Pentatricopeptide repeat-containing protein At3g49710"/>
    <property type="match status" value="1"/>
</dbReference>
<dbReference type="FunFam" id="1.25.40.10:FF:000348">
    <property type="entry name" value="Pentatricopeptide repeat-containing protein chloroplastic"/>
    <property type="match status" value="1"/>
</dbReference>
<dbReference type="Gene3D" id="1.25.40.10">
    <property type="entry name" value="Tetratricopeptide repeat domain"/>
    <property type="match status" value="6"/>
</dbReference>
<dbReference type="InterPro" id="IPR032867">
    <property type="entry name" value="DYW_dom"/>
</dbReference>
<dbReference type="InterPro" id="IPR046848">
    <property type="entry name" value="E_motif"/>
</dbReference>
<dbReference type="InterPro" id="IPR002885">
    <property type="entry name" value="Pentatricopeptide_rpt"/>
</dbReference>
<dbReference type="InterPro" id="IPR046960">
    <property type="entry name" value="PPR_At4g14850-like_plant"/>
</dbReference>
<dbReference type="InterPro" id="IPR011990">
    <property type="entry name" value="TPR-like_helical_dom_sf"/>
</dbReference>
<dbReference type="NCBIfam" id="TIGR00756">
    <property type="entry name" value="PPR"/>
    <property type="match status" value="5"/>
</dbReference>
<dbReference type="PANTHER" id="PTHR47926:SF519">
    <property type="entry name" value="DYW DOMAIN-CONTAINING PROTEIN"/>
    <property type="match status" value="1"/>
</dbReference>
<dbReference type="PANTHER" id="PTHR47926">
    <property type="entry name" value="PENTATRICOPEPTIDE REPEAT-CONTAINING PROTEIN"/>
    <property type="match status" value="1"/>
</dbReference>
<dbReference type="Pfam" id="PF14432">
    <property type="entry name" value="DYW_deaminase"/>
    <property type="match status" value="1"/>
</dbReference>
<dbReference type="Pfam" id="PF20431">
    <property type="entry name" value="E_motif"/>
    <property type="match status" value="1"/>
</dbReference>
<dbReference type="Pfam" id="PF01535">
    <property type="entry name" value="PPR"/>
    <property type="match status" value="8"/>
</dbReference>
<dbReference type="Pfam" id="PF13041">
    <property type="entry name" value="PPR_2"/>
    <property type="match status" value="3"/>
</dbReference>
<dbReference type="SUPFAM" id="SSF48452">
    <property type="entry name" value="TPR-like"/>
    <property type="match status" value="1"/>
</dbReference>
<dbReference type="PROSITE" id="PS51375">
    <property type="entry name" value="PPR"/>
    <property type="match status" value="15"/>
</dbReference>
<gene>
    <name type="primary">PCMP-H41</name>
    <name type="ordered locus">At2g22070</name>
    <name type="ORF">T16B14.8</name>
</gene>
<feature type="chain" id="PRO_0000356027" description="Pentatricopeptide repeat-containing protein At2g22070">
    <location>
        <begin position="1"/>
        <end position="786"/>
    </location>
</feature>
<feature type="repeat" description="PPR 1">
    <location>
        <begin position="48"/>
        <end position="78"/>
    </location>
</feature>
<feature type="repeat" description="PPR 2">
    <location>
        <begin position="79"/>
        <end position="109"/>
    </location>
</feature>
<feature type="repeat" description="PPR 3">
    <location>
        <begin position="110"/>
        <end position="144"/>
    </location>
</feature>
<feature type="repeat" description="PPR 4">
    <location>
        <begin position="145"/>
        <end position="179"/>
    </location>
</feature>
<feature type="repeat" description="PPR 5">
    <location>
        <begin position="180"/>
        <end position="214"/>
    </location>
</feature>
<feature type="repeat" description="PPR 6">
    <location>
        <begin position="215"/>
        <end position="241"/>
    </location>
</feature>
<feature type="repeat" description="PPR 7">
    <location>
        <begin position="242"/>
        <end position="276"/>
    </location>
</feature>
<feature type="repeat" description="PPR 8">
    <location>
        <begin position="278"/>
        <end position="312"/>
    </location>
</feature>
<feature type="repeat" description="PPR 9">
    <location>
        <begin position="313"/>
        <end position="347"/>
    </location>
</feature>
<feature type="repeat" description="PPR 10">
    <location>
        <begin position="350"/>
        <end position="376"/>
    </location>
</feature>
<feature type="repeat" description="PPR 11">
    <location>
        <begin position="377"/>
        <end position="411"/>
    </location>
</feature>
<feature type="repeat" description="PPR 12">
    <location>
        <begin position="412"/>
        <end position="446"/>
    </location>
</feature>
<feature type="repeat" description="PPR 13">
    <location>
        <begin position="447"/>
        <end position="477"/>
    </location>
</feature>
<feature type="repeat" description="PPR 14">
    <location>
        <begin position="479"/>
        <end position="513"/>
    </location>
</feature>
<feature type="repeat" description="PPR 15">
    <location>
        <begin position="514"/>
        <end position="548"/>
    </location>
</feature>
<feature type="repeat" description="PPR 16">
    <location>
        <begin position="550"/>
        <end position="580"/>
    </location>
</feature>
<feature type="region of interest" description="Type E motif">
    <location>
        <begin position="585"/>
        <end position="660"/>
    </location>
</feature>
<feature type="region of interest" description="Type E(+) motif">
    <location>
        <begin position="661"/>
        <end position="691"/>
    </location>
</feature>
<feature type="region of interest" description="Type DYW motif">
    <location>
        <begin position="692"/>
        <end position="786"/>
    </location>
</feature>
<protein>
    <recommendedName>
        <fullName>Pentatricopeptide repeat-containing protein At2g22070</fullName>
    </recommendedName>
</protein>
<proteinExistence type="inferred from homology"/>
<evidence type="ECO:0000305" key="1"/>
<comment type="similarity">
    <text evidence="1">Belongs to the PPR family. PCMP-H subfamily.</text>
</comment>
<comment type="online information" name="Pentatricopeptide repeat proteins">
    <link uri="https://ppr.plantenergy.uwa.edu.au"/>
</comment>
<sequence>MDAPVPLSLSTLLELCTNLLQKSVNKSNGRFTAQLVHCRVIKSGLMFSVYLMNNLMNVYSKTGYALHARKLFDEMPLRTAFSWNTVLSAYSKRGDMDSTCEFFDQLPQRDSVSWTTMIVGYKNIGQYHKAIRVMGDMVKEGIEPTQFTLTNVLASVAATRCMETGKKVHSFIVKLGLRGNVSVSNSLLNMYAKCGDPMMAKFVFDRMVVRDISSWNAMIALHMQVGQMDLAMAQFEQMAERDIVTWNSMISGFNQRGYDLRALDIFSKMLRDSLLSPDRFTLASVLSACANLEKLCIGKQIHSHIVTTGFDISGIVLNALISMYSRCGGVETARRLIEQRGTKDLKIEGFTALLDGYIKLGDMNQAKNIFVSLKDRDVVAWTAMIVGYEQHGSYGEAINLFRSMVGGGQRPNSYTLAAMLSVASSLASLSHGKQIHGSAVKSGEIYSVSVSNALITMYAKAGNITSASRAFDLIRCERDTVSWTSMIIALAQHGHAEEALELFETMLMEGLRPDHITYVGVFSACTHAGLVNQGRQYFDMMKDVDKIIPTLSHYACMVDLFGRAGLLQEAQEFIEKMPIEPDVVTWGSLLSACRVHKNIDLGKVAAERLLLLEPENSGAYSALANLYSACGKWEEAAKIRKSMKDGRVKKEQGFSWIEVKHKVHVFGVEDGTHPEKNEIYMTMKKIWDEIKKMGYVPDTASVLHDLEEEVKEQILRHHSEKLAIAFGLISTPDKTTLRIMKNLRVCNDCHTAIKFISKLVGREIIVRDTTRFHHFKDGFCSCRDYW</sequence>
<name>PP168_ARATH</name>
<accession>Q9SHZ8</accession>